<protein>
    <recommendedName>
        <fullName evidence="1">NAD(P)H-quinone oxidoreductase subunit O</fullName>
        <ecNumber evidence="1">7.1.1.-</ecNumber>
    </recommendedName>
    <alternativeName>
        <fullName evidence="1">NAD(P)H dehydrogenase I subunit O</fullName>
    </alternativeName>
    <alternativeName>
        <fullName>NDH-1 subunit O</fullName>
    </alternativeName>
    <alternativeName>
        <fullName>NDH-O</fullName>
    </alternativeName>
</protein>
<sequence length="85" mass="9324">MAEPSADPTPTAKPAATLKKGALVRVNRTSYLGSVEASASDPRPPEYIFEGPGELLLVKGEYGQVRWRRPVPDVWLKLSQLEVFS</sequence>
<keyword id="KW-0472">Membrane</keyword>
<keyword id="KW-0520">NAD</keyword>
<keyword id="KW-0521">NADP</keyword>
<keyword id="KW-0618">Plastoquinone</keyword>
<keyword id="KW-0874">Quinone</keyword>
<keyword id="KW-1185">Reference proteome</keyword>
<keyword id="KW-0793">Thylakoid</keyword>
<keyword id="KW-1278">Translocase</keyword>
<keyword id="KW-0813">Transport</keyword>
<gene>
    <name evidence="1" type="primary">ndhO</name>
    <name type="ordered locus">sync_2575</name>
</gene>
<name>NDHO_SYNS3</name>
<dbReference type="EC" id="7.1.1.-" evidence="1"/>
<dbReference type="EMBL" id="CP000435">
    <property type="protein sequence ID" value="ABI47746.1"/>
    <property type="molecule type" value="Genomic_DNA"/>
</dbReference>
<dbReference type="RefSeq" id="WP_011620469.1">
    <property type="nucleotide sequence ID" value="NC_008319.1"/>
</dbReference>
<dbReference type="SMR" id="Q0I708"/>
<dbReference type="STRING" id="64471.sync_2575"/>
<dbReference type="KEGG" id="syg:sync_2575"/>
<dbReference type="eggNOG" id="ENOG5032XZT">
    <property type="taxonomic scope" value="Bacteria"/>
</dbReference>
<dbReference type="HOGENOM" id="CLU_195299_0_0_3"/>
<dbReference type="OrthoDB" id="426633at2"/>
<dbReference type="Proteomes" id="UP000001961">
    <property type="component" value="Chromosome"/>
</dbReference>
<dbReference type="GO" id="GO:0031676">
    <property type="term" value="C:plasma membrane-derived thylakoid membrane"/>
    <property type="evidence" value="ECO:0007669"/>
    <property type="project" value="UniProtKB-SubCell"/>
</dbReference>
<dbReference type="GO" id="GO:0016655">
    <property type="term" value="F:oxidoreductase activity, acting on NAD(P)H, quinone or similar compound as acceptor"/>
    <property type="evidence" value="ECO:0007669"/>
    <property type="project" value="UniProtKB-UniRule"/>
</dbReference>
<dbReference type="GO" id="GO:0048038">
    <property type="term" value="F:quinone binding"/>
    <property type="evidence" value="ECO:0007669"/>
    <property type="project" value="UniProtKB-KW"/>
</dbReference>
<dbReference type="HAMAP" id="MF_01354">
    <property type="entry name" value="NDH1_NDH1O"/>
    <property type="match status" value="1"/>
</dbReference>
<dbReference type="InterPro" id="IPR020905">
    <property type="entry name" value="NdhO"/>
</dbReference>
<dbReference type="Pfam" id="PF11910">
    <property type="entry name" value="NdhO"/>
    <property type="match status" value="1"/>
</dbReference>
<accession>Q0I708</accession>
<proteinExistence type="inferred from homology"/>
<comment type="function">
    <text evidence="1">NDH-1 shuttles electrons from an unknown electron donor, via FMN and iron-sulfur (Fe-S) centers, to quinones in the respiratory and/or the photosynthetic chain. The immediate electron acceptor for the enzyme in this species is believed to be plastoquinone. Couples the redox reaction to proton translocation, and thus conserves the redox energy in a proton gradient. Cyanobacterial NDH-1 also plays a role in inorganic carbon-concentration.</text>
</comment>
<comment type="catalytic activity">
    <reaction evidence="1">
        <text>a plastoquinone + NADH + (n+1) H(+)(in) = a plastoquinol + NAD(+) + n H(+)(out)</text>
        <dbReference type="Rhea" id="RHEA:42608"/>
        <dbReference type="Rhea" id="RHEA-COMP:9561"/>
        <dbReference type="Rhea" id="RHEA-COMP:9562"/>
        <dbReference type="ChEBI" id="CHEBI:15378"/>
        <dbReference type="ChEBI" id="CHEBI:17757"/>
        <dbReference type="ChEBI" id="CHEBI:57540"/>
        <dbReference type="ChEBI" id="CHEBI:57945"/>
        <dbReference type="ChEBI" id="CHEBI:62192"/>
    </reaction>
</comment>
<comment type="catalytic activity">
    <reaction evidence="1">
        <text>a plastoquinone + NADPH + (n+1) H(+)(in) = a plastoquinol + NADP(+) + n H(+)(out)</text>
        <dbReference type="Rhea" id="RHEA:42612"/>
        <dbReference type="Rhea" id="RHEA-COMP:9561"/>
        <dbReference type="Rhea" id="RHEA-COMP:9562"/>
        <dbReference type="ChEBI" id="CHEBI:15378"/>
        <dbReference type="ChEBI" id="CHEBI:17757"/>
        <dbReference type="ChEBI" id="CHEBI:57783"/>
        <dbReference type="ChEBI" id="CHEBI:58349"/>
        <dbReference type="ChEBI" id="CHEBI:62192"/>
    </reaction>
</comment>
<comment type="subunit">
    <text evidence="1">NDH-1 can be composed of about 15 different subunits; different subcomplexes with different compositions have been identified which probably have different functions.</text>
</comment>
<comment type="subcellular location">
    <subcellularLocation>
        <location evidence="1">Cellular thylakoid membrane</location>
        <topology evidence="1">Peripheral membrane protein</topology>
        <orientation evidence="1">Cytoplasmic side</orientation>
    </subcellularLocation>
</comment>
<comment type="similarity">
    <text evidence="1">Belongs to the complex I NdhO subunit family.</text>
</comment>
<feature type="chain" id="PRO_0000353654" description="NAD(P)H-quinone oxidoreductase subunit O">
    <location>
        <begin position="1"/>
        <end position="85"/>
    </location>
</feature>
<evidence type="ECO:0000255" key="1">
    <source>
        <dbReference type="HAMAP-Rule" id="MF_01354"/>
    </source>
</evidence>
<reference key="1">
    <citation type="journal article" date="2006" name="Proc. Natl. Acad. Sci. U.S.A.">
        <title>Genome sequence of Synechococcus CC9311: insights into adaptation to a coastal environment.</title>
        <authorList>
            <person name="Palenik B."/>
            <person name="Ren Q."/>
            <person name="Dupont C.L."/>
            <person name="Myers G.S."/>
            <person name="Heidelberg J.F."/>
            <person name="Badger J.H."/>
            <person name="Madupu R."/>
            <person name="Nelson W.C."/>
            <person name="Brinkac L.M."/>
            <person name="Dodson R.J."/>
            <person name="Durkin A.S."/>
            <person name="Daugherty S.C."/>
            <person name="Sullivan S.A."/>
            <person name="Khouri H."/>
            <person name="Mohamoud Y."/>
            <person name="Halpin R."/>
            <person name="Paulsen I.T."/>
        </authorList>
    </citation>
    <scope>NUCLEOTIDE SEQUENCE [LARGE SCALE GENOMIC DNA]</scope>
    <source>
        <strain>CC9311</strain>
    </source>
</reference>
<organism>
    <name type="scientific">Synechococcus sp. (strain CC9311)</name>
    <dbReference type="NCBI Taxonomy" id="64471"/>
    <lineage>
        <taxon>Bacteria</taxon>
        <taxon>Bacillati</taxon>
        <taxon>Cyanobacteriota</taxon>
        <taxon>Cyanophyceae</taxon>
        <taxon>Synechococcales</taxon>
        <taxon>Synechococcaceae</taxon>
        <taxon>Synechococcus</taxon>
    </lineage>
</organism>